<name>DCUP_VIBVU</name>
<keyword id="KW-0963">Cytoplasm</keyword>
<keyword id="KW-0210">Decarboxylase</keyword>
<keyword id="KW-0456">Lyase</keyword>
<keyword id="KW-0627">Porphyrin biosynthesis</keyword>
<accession>Q8DD14</accession>
<protein>
    <recommendedName>
        <fullName evidence="1">Uroporphyrinogen decarboxylase</fullName>
        <shortName evidence="1">UPD</shortName>
        <shortName evidence="1">URO-D</shortName>
        <ecNumber evidence="1">4.1.1.37</ecNumber>
    </recommendedName>
</protein>
<feature type="chain" id="PRO_0000187658" description="Uroporphyrinogen decarboxylase">
    <location>
        <begin position="1"/>
        <end position="355"/>
    </location>
</feature>
<feature type="binding site" evidence="1">
    <location>
        <begin position="27"/>
        <end position="31"/>
    </location>
    <ligand>
        <name>substrate</name>
    </ligand>
</feature>
<feature type="binding site" evidence="1">
    <location>
        <position position="46"/>
    </location>
    <ligand>
        <name>substrate</name>
    </ligand>
</feature>
<feature type="binding site" evidence="1">
    <location>
        <position position="77"/>
    </location>
    <ligand>
        <name>substrate</name>
    </ligand>
</feature>
<feature type="binding site" evidence="1">
    <location>
        <position position="154"/>
    </location>
    <ligand>
        <name>substrate</name>
    </ligand>
</feature>
<feature type="binding site" evidence="1">
    <location>
        <position position="209"/>
    </location>
    <ligand>
        <name>substrate</name>
    </ligand>
</feature>
<feature type="binding site" evidence="1">
    <location>
        <position position="328"/>
    </location>
    <ligand>
        <name>substrate</name>
    </ligand>
</feature>
<feature type="site" description="Transition state stabilizer" evidence="1">
    <location>
        <position position="77"/>
    </location>
</feature>
<organism>
    <name type="scientific">Vibrio vulnificus (strain CMCP6)</name>
    <dbReference type="NCBI Taxonomy" id="216895"/>
    <lineage>
        <taxon>Bacteria</taxon>
        <taxon>Pseudomonadati</taxon>
        <taxon>Pseudomonadota</taxon>
        <taxon>Gammaproteobacteria</taxon>
        <taxon>Vibrionales</taxon>
        <taxon>Vibrionaceae</taxon>
        <taxon>Vibrio</taxon>
    </lineage>
</organism>
<proteinExistence type="inferred from homology"/>
<dbReference type="EC" id="4.1.1.37" evidence="1"/>
<dbReference type="EMBL" id="AE016795">
    <property type="protein sequence ID" value="AAO09677.1"/>
    <property type="molecule type" value="Genomic_DNA"/>
</dbReference>
<dbReference type="RefSeq" id="WP_011079207.1">
    <property type="nucleotide sequence ID" value="NC_004459.3"/>
</dbReference>
<dbReference type="SMR" id="Q8DD14"/>
<dbReference type="GeneID" id="93895484"/>
<dbReference type="KEGG" id="vvu:VV1_1218"/>
<dbReference type="HOGENOM" id="CLU_040933_0_0_6"/>
<dbReference type="UniPathway" id="UPA00251">
    <property type="reaction ID" value="UER00321"/>
</dbReference>
<dbReference type="Proteomes" id="UP000002275">
    <property type="component" value="Chromosome 1"/>
</dbReference>
<dbReference type="GO" id="GO:0005829">
    <property type="term" value="C:cytosol"/>
    <property type="evidence" value="ECO:0007669"/>
    <property type="project" value="TreeGrafter"/>
</dbReference>
<dbReference type="GO" id="GO:0004853">
    <property type="term" value="F:uroporphyrinogen decarboxylase activity"/>
    <property type="evidence" value="ECO:0007669"/>
    <property type="project" value="UniProtKB-UniRule"/>
</dbReference>
<dbReference type="GO" id="GO:0019353">
    <property type="term" value="P:protoporphyrinogen IX biosynthetic process from glutamate"/>
    <property type="evidence" value="ECO:0007669"/>
    <property type="project" value="TreeGrafter"/>
</dbReference>
<dbReference type="CDD" id="cd00717">
    <property type="entry name" value="URO-D"/>
    <property type="match status" value="1"/>
</dbReference>
<dbReference type="FunFam" id="3.20.20.210:FF:000001">
    <property type="entry name" value="Uroporphyrinogen decarboxylase"/>
    <property type="match status" value="1"/>
</dbReference>
<dbReference type="Gene3D" id="3.20.20.210">
    <property type="match status" value="1"/>
</dbReference>
<dbReference type="HAMAP" id="MF_00218">
    <property type="entry name" value="URO_D"/>
    <property type="match status" value="1"/>
</dbReference>
<dbReference type="InterPro" id="IPR038071">
    <property type="entry name" value="UROD/MetE-like_sf"/>
</dbReference>
<dbReference type="InterPro" id="IPR006361">
    <property type="entry name" value="Uroporphyrinogen_deCO2ase_HemE"/>
</dbReference>
<dbReference type="InterPro" id="IPR000257">
    <property type="entry name" value="Uroporphyrinogen_deCOase"/>
</dbReference>
<dbReference type="NCBIfam" id="TIGR01464">
    <property type="entry name" value="hemE"/>
    <property type="match status" value="1"/>
</dbReference>
<dbReference type="PANTHER" id="PTHR21091">
    <property type="entry name" value="METHYLTETRAHYDROFOLATE:HOMOCYSTEINE METHYLTRANSFERASE RELATED"/>
    <property type="match status" value="1"/>
</dbReference>
<dbReference type="PANTHER" id="PTHR21091:SF169">
    <property type="entry name" value="UROPORPHYRINOGEN DECARBOXYLASE"/>
    <property type="match status" value="1"/>
</dbReference>
<dbReference type="Pfam" id="PF01208">
    <property type="entry name" value="URO-D"/>
    <property type="match status" value="1"/>
</dbReference>
<dbReference type="SUPFAM" id="SSF51726">
    <property type="entry name" value="UROD/MetE-like"/>
    <property type="match status" value="1"/>
</dbReference>
<dbReference type="PROSITE" id="PS00906">
    <property type="entry name" value="UROD_1"/>
    <property type="match status" value="1"/>
</dbReference>
<dbReference type="PROSITE" id="PS00907">
    <property type="entry name" value="UROD_2"/>
    <property type="match status" value="1"/>
</dbReference>
<gene>
    <name evidence="1" type="primary">hemE</name>
    <name type="ordered locus">VV1_1218</name>
</gene>
<reference key="1">
    <citation type="submission" date="2002-12" db="EMBL/GenBank/DDBJ databases">
        <title>Complete genome sequence of Vibrio vulnificus CMCP6.</title>
        <authorList>
            <person name="Rhee J.H."/>
            <person name="Kim S.Y."/>
            <person name="Chung S.S."/>
            <person name="Kim J.J."/>
            <person name="Moon Y.H."/>
            <person name="Jeong H."/>
            <person name="Choy H.E."/>
        </authorList>
    </citation>
    <scope>NUCLEOTIDE SEQUENCE [LARGE SCALE GENOMIC DNA]</scope>
    <source>
        <strain>CMCP6</strain>
    </source>
</reference>
<evidence type="ECO:0000255" key="1">
    <source>
        <dbReference type="HAMAP-Rule" id="MF_00218"/>
    </source>
</evidence>
<comment type="function">
    <text evidence="1">Catalyzes the decarboxylation of four acetate groups of uroporphyrinogen-III to yield coproporphyrinogen-III.</text>
</comment>
<comment type="catalytic activity">
    <reaction evidence="1">
        <text>uroporphyrinogen III + 4 H(+) = coproporphyrinogen III + 4 CO2</text>
        <dbReference type="Rhea" id="RHEA:19865"/>
        <dbReference type="ChEBI" id="CHEBI:15378"/>
        <dbReference type="ChEBI" id="CHEBI:16526"/>
        <dbReference type="ChEBI" id="CHEBI:57308"/>
        <dbReference type="ChEBI" id="CHEBI:57309"/>
        <dbReference type="EC" id="4.1.1.37"/>
    </reaction>
</comment>
<comment type="pathway">
    <text evidence="1">Porphyrin-containing compound metabolism; protoporphyrin-IX biosynthesis; coproporphyrinogen-III from 5-aminolevulinate: step 4/4.</text>
</comment>
<comment type="subunit">
    <text evidence="1">Homodimer.</text>
</comment>
<comment type="subcellular location">
    <subcellularLocation>
        <location evidence="1">Cytoplasm</location>
    </subcellularLocation>
</comment>
<comment type="similarity">
    <text evidence="1">Belongs to the uroporphyrinogen decarboxylase family.</text>
</comment>
<sequence length="355" mass="39213">MTELKNDRYLRALLKEPVDCTPVWMMRQAGRYLPEYKATRAQAGDFMSLCKNAELASEVTLQPLRRFPLDAAILFSDILTIPDAMGLGLRFSTGEGPIFDNPITCKADVEKIGVPDPEGELQYVMNAVRQIRKDLNGDVPLIGFSGSPWTLATYMVEGGSSKAFTKIKKMMYAEPQTLHLLLDKLADSVIEYLNAQIKAGAQSVMVFDTWGGVLTPRDYNLFSLQYMHKIVDGLIRENDGRRVPVTLFTKNGGMWLEQIAATGCDAVGLDWTINIADAKARVGDKVALQGNMDPSMLYASHDRIREEVASILEGFGHGGTGHVFNLGHGIHLDVPPENAGVFVEAVHELSKPYHQ</sequence>